<organism>
    <name type="scientific">Mycobacterium leprae (strain TN)</name>
    <dbReference type="NCBI Taxonomy" id="272631"/>
    <lineage>
        <taxon>Bacteria</taxon>
        <taxon>Bacillati</taxon>
        <taxon>Actinomycetota</taxon>
        <taxon>Actinomycetes</taxon>
        <taxon>Mycobacteriales</taxon>
        <taxon>Mycobacteriaceae</taxon>
        <taxon>Mycobacterium</taxon>
    </lineage>
</organism>
<evidence type="ECO:0000250" key="1"/>
<evidence type="ECO:0000255" key="2">
    <source>
        <dbReference type="HAMAP-Rule" id="MF_01109"/>
    </source>
</evidence>
<evidence type="ECO:0000305" key="3"/>
<feature type="chain" id="PRO_0000112951" description="Ornithine carbamoyltransferase">
    <location>
        <begin position="1"/>
        <end position="306"/>
    </location>
</feature>
<feature type="binding site" evidence="2">
    <location>
        <begin position="50"/>
        <end position="53"/>
    </location>
    <ligand>
        <name>carbamoyl phosphate</name>
        <dbReference type="ChEBI" id="CHEBI:58228"/>
    </ligand>
</feature>
<feature type="binding site" evidence="2">
    <location>
        <position position="77"/>
    </location>
    <ligand>
        <name>carbamoyl phosphate</name>
        <dbReference type="ChEBI" id="CHEBI:58228"/>
    </ligand>
</feature>
<feature type="binding site" evidence="2">
    <location>
        <position position="101"/>
    </location>
    <ligand>
        <name>carbamoyl phosphate</name>
        <dbReference type="ChEBI" id="CHEBI:58228"/>
    </ligand>
</feature>
<feature type="binding site" evidence="2">
    <location>
        <begin position="128"/>
        <end position="131"/>
    </location>
    <ligand>
        <name>carbamoyl phosphate</name>
        <dbReference type="ChEBI" id="CHEBI:58228"/>
    </ligand>
</feature>
<feature type="binding site" evidence="2">
    <location>
        <position position="160"/>
    </location>
    <ligand>
        <name>L-ornithine</name>
        <dbReference type="ChEBI" id="CHEBI:46911"/>
    </ligand>
</feature>
<feature type="binding site" evidence="2">
    <location>
        <position position="224"/>
    </location>
    <ligand>
        <name>L-ornithine</name>
        <dbReference type="ChEBI" id="CHEBI:46911"/>
    </ligand>
</feature>
<feature type="binding site" evidence="2">
    <location>
        <begin position="228"/>
        <end position="229"/>
    </location>
    <ligand>
        <name>L-ornithine</name>
        <dbReference type="ChEBI" id="CHEBI:46911"/>
    </ligand>
</feature>
<feature type="binding site" evidence="2">
    <location>
        <begin position="264"/>
        <end position="265"/>
    </location>
    <ligand>
        <name>carbamoyl phosphate</name>
        <dbReference type="ChEBI" id="CHEBI:58228"/>
    </ligand>
</feature>
<feature type="binding site" evidence="2">
    <location>
        <position position="292"/>
    </location>
    <ligand>
        <name>carbamoyl phosphate</name>
        <dbReference type="ChEBI" id="CHEBI:58228"/>
    </ligand>
</feature>
<accession>Q9CC11</accession>
<keyword id="KW-0028">Amino-acid biosynthesis</keyword>
<keyword id="KW-0055">Arginine biosynthesis</keyword>
<keyword id="KW-0963">Cytoplasm</keyword>
<keyword id="KW-1185">Reference proteome</keyword>
<keyword id="KW-0808">Transferase</keyword>
<dbReference type="EC" id="2.1.3.3" evidence="2"/>
<dbReference type="EMBL" id="AL583922">
    <property type="protein sequence ID" value="CAC30361.1"/>
    <property type="status" value="ALT_INIT"/>
    <property type="molecule type" value="Genomic_DNA"/>
</dbReference>
<dbReference type="PIR" id="D87085">
    <property type="entry name" value="D87085"/>
</dbReference>
<dbReference type="RefSeq" id="WP_041322775.1">
    <property type="nucleotide sequence ID" value="NC_002677.1"/>
</dbReference>
<dbReference type="SMR" id="Q9CC11"/>
<dbReference type="STRING" id="272631.gene:17575249"/>
<dbReference type="KEGG" id="mle:ML1410"/>
<dbReference type="Leproma" id="ML1410"/>
<dbReference type="eggNOG" id="COG0078">
    <property type="taxonomic scope" value="Bacteria"/>
</dbReference>
<dbReference type="HOGENOM" id="CLU_043846_3_2_11"/>
<dbReference type="UniPathway" id="UPA00068">
    <property type="reaction ID" value="UER00112"/>
</dbReference>
<dbReference type="Proteomes" id="UP000000806">
    <property type="component" value="Chromosome"/>
</dbReference>
<dbReference type="GO" id="GO:0005737">
    <property type="term" value="C:cytoplasm"/>
    <property type="evidence" value="ECO:0007669"/>
    <property type="project" value="UniProtKB-SubCell"/>
</dbReference>
<dbReference type="GO" id="GO:0016597">
    <property type="term" value="F:amino acid binding"/>
    <property type="evidence" value="ECO:0007669"/>
    <property type="project" value="InterPro"/>
</dbReference>
<dbReference type="GO" id="GO:0004585">
    <property type="term" value="F:ornithine carbamoyltransferase activity"/>
    <property type="evidence" value="ECO:0007669"/>
    <property type="project" value="UniProtKB-UniRule"/>
</dbReference>
<dbReference type="GO" id="GO:0042450">
    <property type="term" value="P:arginine biosynthetic process via ornithine"/>
    <property type="evidence" value="ECO:0007669"/>
    <property type="project" value="TreeGrafter"/>
</dbReference>
<dbReference type="GO" id="GO:0019240">
    <property type="term" value="P:citrulline biosynthetic process"/>
    <property type="evidence" value="ECO:0007669"/>
    <property type="project" value="TreeGrafter"/>
</dbReference>
<dbReference type="GO" id="GO:0006526">
    <property type="term" value="P:L-arginine biosynthetic process"/>
    <property type="evidence" value="ECO:0007669"/>
    <property type="project" value="UniProtKB-UniRule"/>
</dbReference>
<dbReference type="FunFam" id="3.40.50.1370:FF:000008">
    <property type="entry name" value="Ornithine carbamoyltransferase"/>
    <property type="match status" value="1"/>
</dbReference>
<dbReference type="Gene3D" id="3.40.50.1370">
    <property type="entry name" value="Aspartate/ornithine carbamoyltransferase"/>
    <property type="match status" value="2"/>
</dbReference>
<dbReference type="HAMAP" id="MF_01109">
    <property type="entry name" value="OTCase"/>
    <property type="match status" value="1"/>
</dbReference>
<dbReference type="InterPro" id="IPR006132">
    <property type="entry name" value="Asp/Orn_carbamoyltranf_P-bd"/>
</dbReference>
<dbReference type="InterPro" id="IPR006130">
    <property type="entry name" value="Asp/Orn_carbamoylTrfase"/>
</dbReference>
<dbReference type="InterPro" id="IPR036901">
    <property type="entry name" value="Asp/Orn_carbamoylTrfase_sf"/>
</dbReference>
<dbReference type="InterPro" id="IPR006131">
    <property type="entry name" value="Asp_carbamoyltransf_Asp/Orn-bd"/>
</dbReference>
<dbReference type="InterPro" id="IPR002292">
    <property type="entry name" value="Orn/put_carbamltrans"/>
</dbReference>
<dbReference type="InterPro" id="IPR024904">
    <property type="entry name" value="OTCase_ArgI"/>
</dbReference>
<dbReference type="NCBIfam" id="TIGR00658">
    <property type="entry name" value="orni_carb_tr"/>
    <property type="match status" value="1"/>
</dbReference>
<dbReference type="NCBIfam" id="NF001986">
    <property type="entry name" value="PRK00779.1"/>
    <property type="match status" value="1"/>
</dbReference>
<dbReference type="PANTHER" id="PTHR45753">
    <property type="entry name" value="ORNITHINE CARBAMOYLTRANSFERASE, MITOCHONDRIAL"/>
    <property type="match status" value="1"/>
</dbReference>
<dbReference type="PANTHER" id="PTHR45753:SF3">
    <property type="entry name" value="ORNITHINE TRANSCARBAMYLASE, MITOCHONDRIAL"/>
    <property type="match status" value="1"/>
</dbReference>
<dbReference type="Pfam" id="PF00185">
    <property type="entry name" value="OTCace"/>
    <property type="match status" value="1"/>
</dbReference>
<dbReference type="Pfam" id="PF02729">
    <property type="entry name" value="OTCace_N"/>
    <property type="match status" value="1"/>
</dbReference>
<dbReference type="PRINTS" id="PR00100">
    <property type="entry name" value="AOTCASE"/>
</dbReference>
<dbReference type="PRINTS" id="PR00102">
    <property type="entry name" value="OTCASE"/>
</dbReference>
<dbReference type="SUPFAM" id="SSF53671">
    <property type="entry name" value="Aspartate/ornithine carbamoyltransferase"/>
    <property type="match status" value="1"/>
</dbReference>
<dbReference type="PROSITE" id="PS00097">
    <property type="entry name" value="CARBAMOYLTRANSFERASE"/>
    <property type="match status" value="1"/>
</dbReference>
<protein>
    <recommendedName>
        <fullName evidence="2">Ornithine carbamoyltransferase</fullName>
        <shortName evidence="2">OTCase</shortName>
        <ecNumber evidence="2">2.1.3.3</ecNumber>
    </recommendedName>
</protein>
<sequence>MTRHFLRDDDLSPTEQADILALAADLKKAPFSRRPLAGPRGVAVIFDKNSTRTRFSFDIGIAQLGGHAVVVDGLSTQLGRDETLQDTARVLSGYVDAIVWRTFGQHRLDAMAATATVPVVNALSDEFHPCQVLADLQTIAERKGSLNGLRLSYFGDGANNMAHSLMLGAVTAGVHVTVATPVGFTPDPSVLAAAKKRAEATGASVTVTVDADTAAAGADVLVTDTWTSMGQENDGLDRVKPFWPFQVNARLVGLADSEAIVLHCLPAHRGDEITNEVMDGPTSAIWDEAENRLHAQKALLVWLLER</sequence>
<comment type="function">
    <text evidence="1">Reversibly catalyzes the transfer of the carbamoyl group from carbamoyl phosphate (CP) to the N(epsilon) atom of ornithine (ORN) to produce L-citrulline.</text>
</comment>
<comment type="catalytic activity">
    <reaction evidence="2">
        <text>carbamoyl phosphate + L-ornithine = L-citrulline + phosphate + H(+)</text>
        <dbReference type="Rhea" id="RHEA:19513"/>
        <dbReference type="ChEBI" id="CHEBI:15378"/>
        <dbReference type="ChEBI" id="CHEBI:43474"/>
        <dbReference type="ChEBI" id="CHEBI:46911"/>
        <dbReference type="ChEBI" id="CHEBI:57743"/>
        <dbReference type="ChEBI" id="CHEBI:58228"/>
        <dbReference type="EC" id="2.1.3.3"/>
    </reaction>
</comment>
<comment type="pathway">
    <text evidence="2">Amino-acid biosynthesis; L-arginine biosynthesis; L-arginine from L-ornithine and carbamoyl phosphate: step 1/3.</text>
</comment>
<comment type="subcellular location">
    <subcellularLocation>
        <location evidence="2">Cytoplasm</location>
    </subcellularLocation>
</comment>
<comment type="similarity">
    <text evidence="2">Belongs to the aspartate/ornithine carbamoyltransferase superfamily. OTCase family.</text>
</comment>
<comment type="sequence caution" evidence="3">
    <conflict type="erroneous initiation">
        <sequence resource="EMBL-CDS" id="CAC30361"/>
    </conflict>
</comment>
<reference key="1">
    <citation type="journal article" date="2001" name="Nature">
        <title>Massive gene decay in the leprosy bacillus.</title>
        <authorList>
            <person name="Cole S.T."/>
            <person name="Eiglmeier K."/>
            <person name="Parkhill J."/>
            <person name="James K.D."/>
            <person name="Thomson N.R."/>
            <person name="Wheeler P.R."/>
            <person name="Honore N."/>
            <person name="Garnier T."/>
            <person name="Churcher C.M."/>
            <person name="Harris D.E."/>
            <person name="Mungall K.L."/>
            <person name="Basham D."/>
            <person name="Brown D."/>
            <person name="Chillingworth T."/>
            <person name="Connor R."/>
            <person name="Davies R.M."/>
            <person name="Devlin K."/>
            <person name="Duthoy S."/>
            <person name="Feltwell T."/>
            <person name="Fraser A."/>
            <person name="Hamlin N."/>
            <person name="Holroyd S."/>
            <person name="Hornsby T."/>
            <person name="Jagels K."/>
            <person name="Lacroix C."/>
            <person name="Maclean J."/>
            <person name="Moule S."/>
            <person name="Murphy L.D."/>
            <person name="Oliver K."/>
            <person name="Quail M.A."/>
            <person name="Rajandream M.A."/>
            <person name="Rutherford K.M."/>
            <person name="Rutter S."/>
            <person name="Seeger K."/>
            <person name="Simon S."/>
            <person name="Simmonds M."/>
            <person name="Skelton J."/>
            <person name="Squares R."/>
            <person name="Squares S."/>
            <person name="Stevens K."/>
            <person name="Taylor K."/>
            <person name="Whitehead S."/>
            <person name="Woodward J.R."/>
            <person name="Barrell B.G."/>
        </authorList>
    </citation>
    <scope>NUCLEOTIDE SEQUENCE [LARGE SCALE GENOMIC DNA]</scope>
    <source>
        <strain>TN</strain>
    </source>
</reference>
<name>OTC_MYCLE</name>
<proteinExistence type="inferred from homology"/>
<gene>
    <name evidence="2" type="primary">argF</name>
    <name type="ordered locus">ML1410</name>
</gene>